<keyword id="KW-0067">ATP-binding</keyword>
<keyword id="KW-0418">Kinase</keyword>
<keyword id="KW-0545">Nucleotide biosynthesis</keyword>
<keyword id="KW-0547">Nucleotide-binding</keyword>
<keyword id="KW-1185">Reference proteome</keyword>
<keyword id="KW-0808">Transferase</keyword>
<proteinExistence type="inferred from homology"/>
<evidence type="ECO:0000255" key="1">
    <source>
        <dbReference type="HAMAP-Rule" id="MF_00165"/>
    </source>
</evidence>
<feature type="chain" id="PRO_1000076969" description="Thymidylate kinase">
    <location>
        <begin position="1"/>
        <end position="216"/>
    </location>
</feature>
<feature type="binding site" evidence="1">
    <location>
        <begin position="10"/>
        <end position="17"/>
    </location>
    <ligand>
        <name>ATP</name>
        <dbReference type="ChEBI" id="CHEBI:30616"/>
    </ligand>
</feature>
<dbReference type="EC" id="2.7.4.9" evidence="1"/>
<dbReference type="EMBL" id="AP009389">
    <property type="protein sequence ID" value="BAF58243.1"/>
    <property type="molecule type" value="Genomic_DNA"/>
</dbReference>
<dbReference type="SMR" id="A5D690"/>
<dbReference type="STRING" id="370438.PTH_0062"/>
<dbReference type="KEGG" id="pth:PTH_0062"/>
<dbReference type="eggNOG" id="COG0125">
    <property type="taxonomic scope" value="Bacteria"/>
</dbReference>
<dbReference type="HOGENOM" id="CLU_049131_0_2_9"/>
<dbReference type="Proteomes" id="UP000006556">
    <property type="component" value="Chromosome"/>
</dbReference>
<dbReference type="GO" id="GO:0005829">
    <property type="term" value="C:cytosol"/>
    <property type="evidence" value="ECO:0007669"/>
    <property type="project" value="TreeGrafter"/>
</dbReference>
<dbReference type="GO" id="GO:0005524">
    <property type="term" value="F:ATP binding"/>
    <property type="evidence" value="ECO:0007669"/>
    <property type="project" value="UniProtKB-UniRule"/>
</dbReference>
<dbReference type="GO" id="GO:0004798">
    <property type="term" value="F:dTMP kinase activity"/>
    <property type="evidence" value="ECO:0007669"/>
    <property type="project" value="UniProtKB-UniRule"/>
</dbReference>
<dbReference type="GO" id="GO:0006233">
    <property type="term" value="P:dTDP biosynthetic process"/>
    <property type="evidence" value="ECO:0007669"/>
    <property type="project" value="InterPro"/>
</dbReference>
<dbReference type="GO" id="GO:0006235">
    <property type="term" value="P:dTTP biosynthetic process"/>
    <property type="evidence" value="ECO:0007669"/>
    <property type="project" value="UniProtKB-UniRule"/>
</dbReference>
<dbReference type="GO" id="GO:0006227">
    <property type="term" value="P:dUDP biosynthetic process"/>
    <property type="evidence" value="ECO:0007669"/>
    <property type="project" value="TreeGrafter"/>
</dbReference>
<dbReference type="CDD" id="cd01672">
    <property type="entry name" value="TMPK"/>
    <property type="match status" value="1"/>
</dbReference>
<dbReference type="FunFam" id="3.40.50.300:FF:000225">
    <property type="entry name" value="Thymidylate kinase"/>
    <property type="match status" value="1"/>
</dbReference>
<dbReference type="Gene3D" id="3.40.50.300">
    <property type="entry name" value="P-loop containing nucleotide triphosphate hydrolases"/>
    <property type="match status" value="1"/>
</dbReference>
<dbReference type="HAMAP" id="MF_00165">
    <property type="entry name" value="Thymidylate_kinase"/>
    <property type="match status" value="1"/>
</dbReference>
<dbReference type="InterPro" id="IPR027417">
    <property type="entry name" value="P-loop_NTPase"/>
</dbReference>
<dbReference type="InterPro" id="IPR039430">
    <property type="entry name" value="Thymidylate_kin-like_dom"/>
</dbReference>
<dbReference type="InterPro" id="IPR018095">
    <property type="entry name" value="Thymidylate_kin_CS"/>
</dbReference>
<dbReference type="InterPro" id="IPR018094">
    <property type="entry name" value="Thymidylate_kinase"/>
</dbReference>
<dbReference type="NCBIfam" id="TIGR00041">
    <property type="entry name" value="DTMP_kinase"/>
    <property type="match status" value="1"/>
</dbReference>
<dbReference type="PANTHER" id="PTHR10344">
    <property type="entry name" value="THYMIDYLATE KINASE"/>
    <property type="match status" value="1"/>
</dbReference>
<dbReference type="PANTHER" id="PTHR10344:SF4">
    <property type="entry name" value="UMP-CMP KINASE 2, MITOCHONDRIAL"/>
    <property type="match status" value="1"/>
</dbReference>
<dbReference type="Pfam" id="PF02223">
    <property type="entry name" value="Thymidylate_kin"/>
    <property type="match status" value="1"/>
</dbReference>
<dbReference type="SUPFAM" id="SSF52540">
    <property type="entry name" value="P-loop containing nucleoside triphosphate hydrolases"/>
    <property type="match status" value="1"/>
</dbReference>
<dbReference type="PROSITE" id="PS01331">
    <property type="entry name" value="THYMIDYLATE_KINASE"/>
    <property type="match status" value="1"/>
</dbReference>
<comment type="function">
    <text evidence="1">Phosphorylation of dTMP to form dTDP in both de novo and salvage pathways of dTTP synthesis.</text>
</comment>
<comment type="catalytic activity">
    <reaction evidence="1">
        <text>dTMP + ATP = dTDP + ADP</text>
        <dbReference type="Rhea" id="RHEA:13517"/>
        <dbReference type="ChEBI" id="CHEBI:30616"/>
        <dbReference type="ChEBI" id="CHEBI:58369"/>
        <dbReference type="ChEBI" id="CHEBI:63528"/>
        <dbReference type="ChEBI" id="CHEBI:456216"/>
        <dbReference type="EC" id="2.7.4.9"/>
    </reaction>
</comment>
<comment type="similarity">
    <text evidence="1">Belongs to the thymidylate kinase family.</text>
</comment>
<reference key="1">
    <citation type="journal article" date="2008" name="Genome Res.">
        <title>The genome of Pelotomaculum thermopropionicum reveals niche-associated evolution in anaerobic microbiota.</title>
        <authorList>
            <person name="Kosaka T."/>
            <person name="Kato S."/>
            <person name="Shimoyama T."/>
            <person name="Ishii S."/>
            <person name="Abe T."/>
            <person name="Watanabe K."/>
        </authorList>
    </citation>
    <scope>NUCLEOTIDE SEQUENCE [LARGE SCALE GENOMIC DNA]</scope>
    <source>
        <strain>DSM 13744 / JCM 10971 / SI</strain>
    </source>
</reference>
<organism>
    <name type="scientific">Pelotomaculum thermopropionicum (strain DSM 13744 / JCM 10971 / SI)</name>
    <dbReference type="NCBI Taxonomy" id="370438"/>
    <lineage>
        <taxon>Bacteria</taxon>
        <taxon>Bacillati</taxon>
        <taxon>Bacillota</taxon>
        <taxon>Clostridia</taxon>
        <taxon>Eubacteriales</taxon>
        <taxon>Desulfotomaculaceae</taxon>
        <taxon>Pelotomaculum</taxon>
    </lineage>
</organism>
<protein>
    <recommendedName>
        <fullName evidence="1">Thymidylate kinase</fullName>
        <ecNumber evidence="1">2.7.4.9</ecNumber>
    </recommendedName>
    <alternativeName>
        <fullName evidence="1">dTMP kinase</fullName>
    </alternativeName>
</protein>
<sequence>MKGKFIVFEGVDGSGKTTQIKLLGEKLESMGCPVVYTREPGGTRVGERIREILLNPLYGELVPWAEALLYAAARAQHVAQVILPALREGKVVLCDRFTDSSLAYQGYGRGVDIEMLEQVNRPAAAGVVPDLVLVLDFDREGQTERMARSGRSADRIEREAQEFYRRVRSGYLALAARAPRRYRVIDASRAEKLVHLDVLKAAEEVLDAFLKGNSRA</sequence>
<name>KTHY_PELTS</name>
<accession>A5D690</accession>
<gene>
    <name evidence="1" type="primary">tmk</name>
    <name type="ordered locus">PTH_0062</name>
</gene>